<feature type="chain" id="PRO_0000346285" description="D-ribose pyranase 2">
    <location>
        <begin position="1"/>
        <end position="129"/>
    </location>
</feature>
<feature type="active site" description="Proton donor" evidence="1">
    <location>
        <position position="20"/>
    </location>
</feature>
<feature type="binding site" evidence="1">
    <location>
        <position position="28"/>
    </location>
    <ligand>
        <name>substrate</name>
    </ligand>
</feature>
<feature type="binding site" evidence="1">
    <location>
        <position position="96"/>
    </location>
    <ligand>
        <name>substrate</name>
    </ligand>
</feature>
<feature type="binding site" evidence="1">
    <location>
        <begin position="118"/>
        <end position="120"/>
    </location>
    <ligand>
        <name>substrate</name>
    </ligand>
</feature>
<organism>
    <name type="scientific">Streptomyces griseus subsp. griseus (strain JCM 4626 / CBS 651.72 / NBRC 13350 / KCC S-0626 / ISP 5235)</name>
    <dbReference type="NCBI Taxonomy" id="455632"/>
    <lineage>
        <taxon>Bacteria</taxon>
        <taxon>Bacillati</taxon>
        <taxon>Actinomycetota</taxon>
        <taxon>Actinomycetes</taxon>
        <taxon>Kitasatosporales</taxon>
        <taxon>Streptomycetaceae</taxon>
        <taxon>Streptomyces</taxon>
    </lineage>
</organism>
<proteinExistence type="inferred from homology"/>
<comment type="function">
    <text evidence="1">Catalyzes the interconversion of beta-pyran and beta-furan forms of D-ribose.</text>
</comment>
<comment type="catalytic activity">
    <reaction evidence="1">
        <text>beta-D-ribopyranose = beta-D-ribofuranose</text>
        <dbReference type="Rhea" id="RHEA:25432"/>
        <dbReference type="ChEBI" id="CHEBI:27476"/>
        <dbReference type="ChEBI" id="CHEBI:47002"/>
        <dbReference type="EC" id="5.4.99.62"/>
    </reaction>
</comment>
<comment type="pathway">
    <text evidence="1">Carbohydrate metabolism; D-ribose degradation; D-ribose 5-phosphate from beta-D-ribopyranose: step 1/2.</text>
</comment>
<comment type="subunit">
    <text evidence="1">Homodecamer.</text>
</comment>
<comment type="subcellular location">
    <subcellularLocation>
        <location evidence="1">Cytoplasm</location>
    </subcellularLocation>
</comment>
<comment type="similarity">
    <text evidence="1">Belongs to the RbsD / FucU family. RbsD subfamily.</text>
</comment>
<accession>B1VU78</accession>
<name>RBSD2_STRGG</name>
<sequence>MKKSGILNRHLAGAIAELGHGDTVLVCDAGMPIPPGPRVIDLAFRAGTPSFAEVLDGLLDELVVEGATAAEEIRDANPDAAALLDVHFPWLEAVPHDELKARTAAARLVVRTGEARPYANVLLRCGVFF</sequence>
<dbReference type="EC" id="5.4.99.62" evidence="1"/>
<dbReference type="EMBL" id="AP009493">
    <property type="protein sequence ID" value="BAG17922.1"/>
    <property type="molecule type" value="Genomic_DNA"/>
</dbReference>
<dbReference type="SMR" id="B1VU78"/>
<dbReference type="KEGG" id="sgr:SGR_1093"/>
<dbReference type="eggNOG" id="COG1869">
    <property type="taxonomic scope" value="Bacteria"/>
</dbReference>
<dbReference type="HOGENOM" id="CLU_135498_0_0_11"/>
<dbReference type="UniPathway" id="UPA00916">
    <property type="reaction ID" value="UER00888"/>
</dbReference>
<dbReference type="Proteomes" id="UP000001685">
    <property type="component" value="Chromosome"/>
</dbReference>
<dbReference type="GO" id="GO:0005829">
    <property type="term" value="C:cytosol"/>
    <property type="evidence" value="ECO:0007669"/>
    <property type="project" value="TreeGrafter"/>
</dbReference>
<dbReference type="GO" id="GO:0062193">
    <property type="term" value="F:D-ribose pyranase activity"/>
    <property type="evidence" value="ECO:0007669"/>
    <property type="project" value="UniProtKB-EC"/>
</dbReference>
<dbReference type="GO" id="GO:0016872">
    <property type="term" value="F:intramolecular lyase activity"/>
    <property type="evidence" value="ECO:0007669"/>
    <property type="project" value="UniProtKB-UniRule"/>
</dbReference>
<dbReference type="GO" id="GO:0048029">
    <property type="term" value="F:monosaccharide binding"/>
    <property type="evidence" value="ECO:0007669"/>
    <property type="project" value="InterPro"/>
</dbReference>
<dbReference type="GO" id="GO:0019303">
    <property type="term" value="P:D-ribose catabolic process"/>
    <property type="evidence" value="ECO:0007669"/>
    <property type="project" value="UniProtKB-UniRule"/>
</dbReference>
<dbReference type="FunFam" id="3.40.1650.10:FF:000004">
    <property type="entry name" value="D-ribose pyranase"/>
    <property type="match status" value="1"/>
</dbReference>
<dbReference type="Gene3D" id="3.40.1650.10">
    <property type="entry name" value="RbsD-like domain"/>
    <property type="match status" value="1"/>
</dbReference>
<dbReference type="HAMAP" id="MF_01661">
    <property type="entry name" value="D_rib_pyranase"/>
    <property type="match status" value="1"/>
</dbReference>
<dbReference type="InterPro" id="IPR023064">
    <property type="entry name" value="D-ribose_pyranase"/>
</dbReference>
<dbReference type="InterPro" id="IPR023750">
    <property type="entry name" value="RbsD-like_sf"/>
</dbReference>
<dbReference type="InterPro" id="IPR007721">
    <property type="entry name" value="RbsD_FucU"/>
</dbReference>
<dbReference type="NCBIfam" id="NF008761">
    <property type="entry name" value="PRK11797.1"/>
    <property type="match status" value="1"/>
</dbReference>
<dbReference type="PANTHER" id="PTHR37831">
    <property type="entry name" value="D-RIBOSE PYRANASE"/>
    <property type="match status" value="1"/>
</dbReference>
<dbReference type="PANTHER" id="PTHR37831:SF1">
    <property type="entry name" value="D-RIBOSE PYRANASE"/>
    <property type="match status" value="1"/>
</dbReference>
<dbReference type="Pfam" id="PF05025">
    <property type="entry name" value="RbsD_FucU"/>
    <property type="match status" value="1"/>
</dbReference>
<dbReference type="SUPFAM" id="SSF102546">
    <property type="entry name" value="RbsD-like"/>
    <property type="match status" value="1"/>
</dbReference>
<gene>
    <name evidence="1" type="primary">rbsD2</name>
    <name type="ordered locus">SGR_1093</name>
</gene>
<reference key="1">
    <citation type="journal article" date="2008" name="J. Bacteriol.">
        <title>Genome sequence of the streptomycin-producing microorganism Streptomyces griseus IFO 13350.</title>
        <authorList>
            <person name="Ohnishi Y."/>
            <person name="Ishikawa J."/>
            <person name="Hara H."/>
            <person name="Suzuki H."/>
            <person name="Ikenoya M."/>
            <person name="Ikeda H."/>
            <person name="Yamashita A."/>
            <person name="Hattori M."/>
            <person name="Horinouchi S."/>
        </authorList>
    </citation>
    <scope>NUCLEOTIDE SEQUENCE [LARGE SCALE GENOMIC DNA]</scope>
    <source>
        <strain>JCM 4626 / CBS 651.72 / NBRC 13350 / KCC S-0626 / ISP 5235</strain>
    </source>
</reference>
<protein>
    <recommendedName>
        <fullName evidence="1">D-ribose pyranase 2</fullName>
        <ecNumber evidence="1">5.4.99.62</ecNumber>
    </recommendedName>
</protein>
<keyword id="KW-0119">Carbohydrate metabolism</keyword>
<keyword id="KW-0963">Cytoplasm</keyword>
<keyword id="KW-0413">Isomerase</keyword>
<evidence type="ECO:0000255" key="1">
    <source>
        <dbReference type="HAMAP-Rule" id="MF_01661"/>
    </source>
</evidence>